<proteinExistence type="inferred from homology"/>
<evidence type="ECO:0000255" key="1">
    <source>
        <dbReference type="HAMAP-Rule" id="MF_00351"/>
    </source>
</evidence>
<sequence length="230" mass="25925">MEKIKVKEIFSNVYGVDLGDGLKRIATKSLAPGKRVYGEKLIYSENKEYRIWNPNKSKLGAAIINGLKKMPIKKGTKVLYLGASAGTTPSHVSDISEDTIVYAVEFAPRIMREFIDSCNERINLIPILGDANRPFEYSNIVGKVDVIFEDVAQPNQAEILVKNAKWFLNKDGYAMISIKARSIDVTKNPKEIFLEQKKILIEGGFDIVDEINIEPFEKDHIMFVGIWKGN</sequence>
<name>FLPA_METVS</name>
<dbReference type="EC" id="2.1.1.-" evidence="1"/>
<dbReference type="EMBL" id="X73987">
    <property type="protein sequence ID" value="CAA52165.1"/>
    <property type="molecule type" value="Genomic_DNA"/>
</dbReference>
<dbReference type="EMBL" id="CP000742">
    <property type="protein sequence ID" value="ABR55363.1"/>
    <property type="molecule type" value="Genomic_DNA"/>
</dbReference>
<dbReference type="PIR" id="S34645">
    <property type="entry name" value="S34645"/>
</dbReference>
<dbReference type="RefSeq" id="WP_012066277.1">
    <property type="nucleotide sequence ID" value="NC_009634.1"/>
</dbReference>
<dbReference type="SMR" id="P35552"/>
<dbReference type="STRING" id="406327.Mevan_1469"/>
<dbReference type="GeneID" id="5324773"/>
<dbReference type="KEGG" id="mvn:Mevan_1469"/>
<dbReference type="eggNOG" id="arCOG00078">
    <property type="taxonomic scope" value="Archaea"/>
</dbReference>
<dbReference type="HOGENOM" id="CLU_059055_2_0_2"/>
<dbReference type="OrthoDB" id="6244at2157"/>
<dbReference type="Proteomes" id="UP000001107">
    <property type="component" value="Chromosome"/>
</dbReference>
<dbReference type="GO" id="GO:1990259">
    <property type="term" value="F:histone H2AQ104 methyltransferase activity"/>
    <property type="evidence" value="ECO:0007669"/>
    <property type="project" value="TreeGrafter"/>
</dbReference>
<dbReference type="GO" id="GO:0003723">
    <property type="term" value="F:RNA binding"/>
    <property type="evidence" value="ECO:0007669"/>
    <property type="project" value="UniProtKB-UniRule"/>
</dbReference>
<dbReference type="GO" id="GO:0008649">
    <property type="term" value="F:rRNA methyltransferase activity"/>
    <property type="evidence" value="ECO:0007669"/>
    <property type="project" value="TreeGrafter"/>
</dbReference>
<dbReference type="GO" id="GO:0000494">
    <property type="term" value="P:box C/D sno(s)RNA 3'-end processing"/>
    <property type="evidence" value="ECO:0007669"/>
    <property type="project" value="TreeGrafter"/>
</dbReference>
<dbReference type="GO" id="GO:0008033">
    <property type="term" value="P:tRNA processing"/>
    <property type="evidence" value="ECO:0007669"/>
    <property type="project" value="UniProtKB-UniRule"/>
</dbReference>
<dbReference type="FunFam" id="3.30.200.20:FF:000613">
    <property type="entry name" value="Fibrillarin-like rRNA/tRNA 2'-O-methyltransferase"/>
    <property type="match status" value="1"/>
</dbReference>
<dbReference type="Gene3D" id="3.30.200.20">
    <property type="entry name" value="Phosphorylase Kinase, domain 1"/>
    <property type="match status" value="1"/>
</dbReference>
<dbReference type="Gene3D" id="3.40.50.150">
    <property type="entry name" value="Vaccinia Virus protein VP39"/>
    <property type="match status" value="1"/>
</dbReference>
<dbReference type="HAMAP" id="MF_00351">
    <property type="entry name" value="RNA_methyltransf_FlpA"/>
    <property type="match status" value="1"/>
</dbReference>
<dbReference type="InterPro" id="IPR000692">
    <property type="entry name" value="Fibrillarin"/>
</dbReference>
<dbReference type="InterPro" id="IPR020813">
    <property type="entry name" value="Fibrillarin_CS"/>
</dbReference>
<dbReference type="InterPro" id="IPR029063">
    <property type="entry name" value="SAM-dependent_MTases_sf"/>
</dbReference>
<dbReference type="NCBIfam" id="NF003276">
    <property type="entry name" value="PRK04266.1-2"/>
    <property type="match status" value="1"/>
</dbReference>
<dbReference type="NCBIfam" id="NF003277">
    <property type="entry name" value="PRK04266.1-3"/>
    <property type="match status" value="1"/>
</dbReference>
<dbReference type="NCBIfam" id="NF003279">
    <property type="entry name" value="PRK04266.1-5"/>
    <property type="match status" value="1"/>
</dbReference>
<dbReference type="PANTHER" id="PTHR10335:SF17">
    <property type="entry name" value="FIBRILLARIN"/>
    <property type="match status" value="1"/>
</dbReference>
<dbReference type="PANTHER" id="PTHR10335">
    <property type="entry name" value="RRNA 2-O-METHYLTRANSFERASE FIBRILLARIN"/>
    <property type="match status" value="1"/>
</dbReference>
<dbReference type="Pfam" id="PF01269">
    <property type="entry name" value="Fibrillarin"/>
    <property type="match status" value="1"/>
</dbReference>
<dbReference type="PIRSF" id="PIRSF006540">
    <property type="entry name" value="Nop17p"/>
    <property type="match status" value="1"/>
</dbReference>
<dbReference type="PRINTS" id="PR00052">
    <property type="entry name" value="FIBRILLARIN"/>
</dbReference>
<dbReference type="SMART" id="SM01206">
    <property type="entry name" value="Fibrillarin"/>
    <property type="match status" value="1"/>
</dbReference>
<dbReference type="SUPFAM" id="SSF53335">
    <property type="entry name" value="S-adenosyl-L-methionine-dependent methyltransferases"/>
    <property type="match status" value="1"/>
</dbReference>
<dbReference type="PROSITE" id="PS00566">
    <property type="entry name" value="FIBRILLARIN"/>
    <property type="match status" value="1"/>
</dbReference>
<organism>
    <name type="scientific">Methanococcus vannielii (strain ATCC 35089 / DSM 1224 / JCM 13029 / OCM 148 / SB)</name>
    <dbReference type="NCBI Taxonomy" id="406327"/>
    <lineage>
        <taxon>Archaea</taxon>
        <taxon>Methanobacteriati</taxon>
        <taxon>Methanobacteriota</taxon>
        <taxon>Methanomada group</taxon>
        <taxon>Methanococci</taxon>
        <taxon>Methanococcales</taxon>
        <taxon>Methanococcaceae</taxon>
        <taxon>Methanococcus</taxon>
    </lineage>
</organism>
<comment type="function">
    <text evidence="1">Involved in pre-rRNA and tRNA processing. Utilizes the methyl donor S-adenosyl-L-methionine to catalyze the site-specific 2'-hydroxyl methylation of ribose moieties in rRNA and tRNA. Site specificity is provided by a guide RNA that base pairs with the substrate. Methylation occurs at a characteristic distance from the sequence involved in base pairing with the guide RNA.</text>
</comment>
<comment type="subunit">
    <text evidence="1">Interacts with nop5. Component of box C/D small ribonucleoprotein (sRNP) particles that contain rpl7ae, FlpA and nop5, plus a guide RNA.</text>
</comment>
<comment type="similarity">
    <text evidence="1">Belongs to the methyltransferase superfamily. Fibrillarin family.</text>
</comment>
<gene>
    <name evidence="1" type="primary">flpA</name>
    <name type="synonym">rppA</name>
    <name type="ordered locus">Mevan_1469</name>
</gene>
<reference key="1">
    <citation type="journal article" date="1994" name="J. Bacteriol.">
        <title>Fibrillarin-like proteins occur in the domain Archaea.</title>
        <authorList>
            <person name="Agha Amiri K."/>
        </authorList>
    </citation>
    <scope>NUCLEOTIDE SEQUENCE [GENOMIC DNA]</scope>
</reference>
<reference key="2">
    <citation type="submission" date="2007-06" db="EMBL/GenBank/DDBJ databases">
        <title>Complete sequence of Methanococcus vannielii SB.</title>
        <authorList>
            <consortium name="US DOE Joint Genome Institute"/>
            <person name="Copeland A."/>
            <person name="Lucas S."/>
            <person name="Lapidus A."/>
            <person name="Barry K."/>
            <person name="Glavina del Rio T."/>
            <person name="Dalin E."/>
            <person name="Tice H."/>
            <person name="Pitluck S."/>
            <person name="Chain P."/>
            <person name="Malfatti S."/>
            <person name="Shin M."/>
            <person name="Vergez L."/>
            <person name="Schmutz J."/>
            <person name="Larimer F."/>
            <person name="Land M."/>
            <person name="Hauser L."/>
            <person name="Kyrpides N."/>
            <person name="Anderson I."/>
            <person name="Sieprawska-Lupa M."/>
            <person name="Whitman W.B."/>
            <person name="Richardson P."/>
        </authorList>
    </citation>
    <scope>NUCLEOTIDE SEQUENCE [LARGE SCALE GENOMIC DNA]</scope>
    <source>
        <strain>ATCC 35089 / DSM 1224 / JCM 13029 / OCM 148 / SB</strain>
    </source>
</reference>
<keyword id="KW-0489">Methyltransferase</keyword>
<keyword id="KW-0694">RNA-binding</keyword>
<keyword id="KW-0698">rRNA processing</keyword>
<keyword id="KW-0808">Transferase</keyword>
<keyword id="KW-0819">tRNA processing</keyword>
<feature type="chain" id="PRO_0000148538" description="Fibrillarin-like rRNA/tRNA 2'-O-methyltransferase">
    <location>
        <begin position="1"/>
        <end position="230"/>
    </location>
</feature>
<feature type="binding site" evidence="1">
    <location>
        <begin position="87"/>
        <end position="88"/>
    </location>
    <ligand>
        <name>S-adenosyl-L-methionine</name>
        <dbReference type="ChEBI" id="CHEBI:59789"/>
    </ligand>
</feature>
<feature type="binding site" evidence="1">
    <location>
        <begin position="105"/>
        <end position="106"/>
    </location>
    <ligand>
        <name>S-adenosyl-L-methionine</name>
        <dbReference type="ChEBI" id="CHEBI:59789"/>
    </ligand>
</feature>
<feature type="binding site" evidence="1">
    <location>
        <begin position="130"/>
        <end position="131"/>
    </location>
    <ligand>
        <name>S-adenosyl-L-methionine</name>
        <dbReference type="ChEBI" id="CHEBI:59789"/>
    </ligand>
</feature>
<feature type="binding site" evidence="1">
    <location>
        <begin position="150"/>
        <end position="153"/>
    </location>
    <ligand>
        <name>S-adenosyl-L-methionine</name>
        <dbReference type="ChEBI" id="CHEBI:59789"/>
    </ligand>
</feature>
<protein>
    <recommendedName>
        <fullName evidence="1">Fibrillarin-like rRNA/tRNA 2'-O-methyltransferase</fullName>
        <ecNumber evidence="1">2.1.1.-</ecNumber>
    </recommendedName>
</protein>
<accession>P35552</accession>
<accession>A6US91</accession>